<sequence>MARLERDGTNKSLESLMDSHKPGGTTTNLNQLRTQKSIPGYGLEFTNLSYSIIKKQKKDGVWINKETYLLHDISGQAIKGEIMAIMGPSGAGKSTFLDALAGRIAKGSLQGSVRIDGKPVTTSYMKMVSSYVMQDDQLFPMLTVFETFMFAAEVRLPPSISRDEKKKRVHELLNKLGLQSATHTYIGDEGRRGVSGGERRRVSIGIEIIHKPSLLFLDEPTSGLDSTSAYSVVEKIKDIAQGGSIVLMTIHQPSFRIQMLLDKITILARGRLIYMGRPDALHTHLSGFGRPVPDGENNIEYLLDVITEYDQATVGLDPLVQYQHDGHKPDPAAMTPVPKPPRTPYRRNTPASKHMISLRSQGFTAGTPQPDSSQFGLDDDDNDDDENFDNSLERRSVQTSRNIVTSGVYPRLASQFYQDFSAKDFSVWLYNGVVGTPRRPPSWTPARTPGWTPGKTPLSGPRSFVSNQHSASYQDPYYIQKTNTVVGQSMDYSATSYAPSYEEFEIEEVLDEPDLGPKYANPWLREVAVLSWRTVLNVIRTPELFASREIVLTVMALVLSTIFKNLGDTTFIDINRLLNFYIFAVCLVFFSSNDAVPSFIMERFIFIRETSHNAYRASSYVISSLIVYLPFFAVQGLTFAVITKLMLHLKSNLFNFWMILFASLITTNAYVMLVSALVPSYITGYAVVIATTALFFLTCGFFLKRTQIPAYWKWLHYISAIKYPFEGLLINEFKNNRGCYSGNKADLSPGPLGDVKPSKHHNASLPLNCLLGEDVLSTMDITMESLWYDILILLAWGVLYRFFFYLVLRFYSKNERK</sequence>
<gene>
    <name evidence="7" type="primary">STR</name>
    <name evidence="9" type="ordered locus">MTR_8g107450</name>
    <name evidence="10" type="ORF">MtrunA17_Chr8g0393191</name>
</gene>
<comment type="function">
    <text evidence="5">Together with STR2, required for arbuscule development in arbuscular mycorrhizal (AM) symbiosis.</text>
</comment>
<comment type="subunit">
    <text evidence="5">Heterodimerizes with STR2; the resulting transporter is located in the peri-arbuscular membrane.</text>
</comment>
<comment type="subcellular location">
    <subcellularLocation>
        <location evidence="5">Cell membrane</location>
        <topology evidence="1">Multi-pass membrane protein</topology>
    </subcellularLocation>
    <text evidence="5">Located in the peri-arbuscular membrane of arbuscular mycorrhiza (AM).</text>
</comment>
<comment type="tissue specificity">
    <text evidence="5">Expressed constitutively in the vascular tissue of roots.</text>
</comment>
<comment type="induction">
    <text evidence="5 6">Accumulates in roots cortical cells containing arbuscules, in a RAM1-dependent manner, upon arbuscular mycorrhizal (AM) symbiosis with Glomus versiforme (PubMed:20453115, PubMed:26511916). Triggered by RAM1 (PubMed:26511916).</text>
</comment>
<comment type="disruption phenotype">
    <text evidence="5">Stunted arbuscule phenotype due to an impaired arbuscule development during arbuscular mycorrhizal (AM) symbiosis with Glomus versiforme; normal initial phases of the symbiosis, including hyphopodia formation and fungal entry into the cortex, as well as normal arbuscule development initiation, including arbuscule-associated genes expression, but strongly delayed and impaired arbuscule development (PubMed:20453115). Normal nodulation in the presence of Sinorhizobium meliloti (PubMed:20453115).</text>
</comment>
<comment type="similarity">
    <text evidence="8">Belongs to the ABC transporter superfamily. ABCG family. Stunted arbuscule (STR) subfamily.</text>
</comment>
<protein>
    <recommendedName>
        <fullName evidence="7">ABC transporter G family member STR</fullName>
        <ecNumber>7.6.2.-</ecNumber>
    </recommendedName>
    <alternativeName>
        <fullName evidence="7">Protein STUNTED ARBUSCULE</fullName>
    </alternativeName>
</protein>
<dbReference type="EC" id="7.6.2.-"/>
<dbReference type="EMBL" id="FJ659114">
    <property type="protein sequence ID" value="ACV73541.1"/>
    <property type="molecule type" value="Genomic_DNA"/>
</dbReference>
<dbReference type="EMBL" id="FJ659115">
    <property type="protein sequence ID" value="ACV73542.1"/>
    <property type="molecule type" value="mRNA"/>
</dbReference>
<dbReference type="EMBL" id="CM001224">
    <property type="protein sequence ID" value="AET05608.1"/>
    <property type="molecule type" value="Genomic_DNA"/>
</dbReference>
<dbReference type="EMBL" id="PSQE01000008">
    <property type="protein sequence ID" value="RHN43934.1"/>
    <property type="molecule type" value="Genomic_DNA"/>
</dbReference>
<dbReference type="RefSeq" id="XP_003631132.1">
    <property type="nucleotide sequence ID" value="XM_003631084.2"/>
</dbReference>
<dbReference type="SMR" id="D3GE74"/>
<dbReference type="TCDB" id="3.A.1.204.22">
    <property type="family name" value="the atp-binding cassette (abc) superfamily"/>
</dbReference>
<dbReference type="GlyCosmos" id="D3GE74">
    <property type="glycosylation" value="1 site, No reported glycans"/>
</dbReference>
<dbReference type="PaxDb" id="3880-AET05608"/>
<dbReference type="EnsemblPlants" id="rna50572">
    <property type="protein sequence ID" value="RHN43934.1"/>
    <property type="gene ID" value="gene50572"/>
</dbReference>
<dbReference type="GeneID" id="11412901"/>
<dbReference type="Gramene" id="rna50572">
    <property type="protein sequence ID" value="RHN43934.1"/>
    <property type="gene ID" value="gene50572"/>
</dbReference>
<dbReference type="KEGG" id="mtr:11412901"/>
<dbReference type="eggNOG" id="KOG0061">
    <property type="taxonomic scope" value="Eukaryota"/>
</dbReference>
<dbReference type="HOGENOM" id="CLU_000604_57_8_1"/>
<dbReference type="OMA" id="AMRGEIM"/>
<dbReference type="OrthoDB" id="66620at2759"/>
<dbReference type="Proteomes" id="UP000002051">
    <property type="component" value="Chromosome 8"/>
</dbReference>
<dbReference type="Proteomes" id="UP000265566">
    <property type="component" value="Chromosome 8"/>
</dbReference>
<dbReference type="GO" id="GO:0016020">
    <property type="term" value="C:membrane"/>
    <property type="evidence" value="ECO:0000318"/>
    <property type="project" value="GO_Central"/>
</dbReference>
<dbReference type="GO" id="GO:0085042">
    <property type="term" value="C:periarbuscular membrane"/>
    <property type="evidence" value="ECO:0000314"/>
    <property type="project" value="UniProtKB"/>
</dbReference>
<dbReference type="GO" id="GO:0005886">
    <property type="term" value="C:plasma membrane"/>
    <property type="evidence" value="ECO:0007669"/>
    <property type="project" value="UniProtKB-SubCell"/>
</dbReference>
<dbReference type="GO" id="GO:0140359">
    <property type="term" value="F:ABC-type transporter activity"/>
    <property type="evidence" value="ECO:0007669"/>
    <property type="project" value="InterPro"/>
</dbReference>
<dbReference type="GO" id="GO:0005524">
    <property type="term" value="F:ATP binding"/>
    <property type="evidence" value="ECO:0007669"/>
    <property type="project" value="UniProtKB-KW"/>
</dbReference>
<dbReference type="GO" id="GO:0016887">
    <property type="term" value="F:ATP hydrolysis activity"/>
    <property type="evidence" value="ECO:0007669"/>
    <property type="project" value="InterPro"/>
</dbReference>
<dbReference type="GO" id="GO:0042626">
    <property type="term" value="F:ATPase-coupled transmembrane transporter activity"/>
    <property type="evidence" value="ECO:0000318"/>
    <property type="project" value="GO_Central"/>
</dbReference>
<dbReference type="GO" id="GO:0036377">
    <property type="term" value="P:arbuscular mycorrhizal association"/>
    <property type="evidence" value="ECO:0000315"/>
    <property type="project" value="UniProtKB"/>
</dbReference>
<dbReference type="GO" id="GO:0009610">
    <property type="term" value="P:response to symbiotic fungus"/>
    <property type="evidence" value="ECO:0000270"/>
    <property type="project" value="UniProtKB"/>
</dbReference>
<dbReference type="GO" id="GO:0055085">
    <property type="term" value="P:transmembrane transport"/>
    <property type="evidence" value="ECO:0000318"/>
    <property type="project" value="GO_Central"/>
</dbReference>
<dbReference type="CDD" id="cd03213">
    <property type="entry name" value="ABCG_EPDR"/>
    <property type="match status" value="1"/>
</dbReference>
<dbReference type="FunFam" id="3.40.50.300:FF:000530">
    <property type="entry name" value="ABC transporter G family member 6"/>
    <property type="match status" value="1"/>
</dbReference>
<dbReference type="Gene3D" id="3.40.50.300">
    <property type="entry name" value="P-loop containing nucleotide triphosphate hydrolases"/>
    <property type="match status" value="1"/>
</dbReference>
<dbReference type="InterPro" id="IPR003593">
    <property type="entry name" value="AAA+_ATPase"/>
</dbReference>
<dbReference type="InterPro" id="IPR013525">
    <property type="entry name" value="ABC2_TM"/>
</dbReference>
<dbReference type="InterPro" id="IPR003439">
    <property type="entry name" value="ABC_transporter-like_ATP-bd"/>
</dbReference>
<dbReference type="InterPro" id="IPR017871">
    <property type="entry name" value="ABC_transporter-like_CS"/>
</dbReference>
<dbReference type="InterPro" id="IPR050352">
    <property type="entry name" value="ABCG_transporters"/>
</dbReference>
<dbReference type="InterPro" id="IPR027417">
    <property type="entry name" value="P-loop_NTPase"/>
</dbReference>
<dbReference type="PANTHER" id="PTHR48041">
    <property type="entry name" value="ABC TRANSPORTER G FAMILY MEMBER 28"/>
    <property type="match status" value="1"/>
</dbReference>
<dbReference type="PANTHER" id="PTHR48041:SF73">
    <property type="entry name" value="ABC TRANSPORTER G FAMILY MEMBER STR"/>
    <property type="match status" value="1"/>
</dbReference>
<dbReference type="Pfam" id="PF01061">
    <property type="entry name" value="ABC2_membrane"/>
    <property type="match status" value="1"/>
</dbReference>
<dbReference type="Pfam" id="PF00005">
    <property type="entry name" value="ABC_tran"/>
    <property type="match status" value="1"/>
</dbReference>
<dbReference type="SMART" id="SM00382">
    <property type="entry name" value="AAA"/>
    <property type="match status" value="1"/>
</dbReference>
<dbReference type="SUPFAM" id="SSF52540">
    <property type="entry name" value="P-loop containing nucleoside triphosphate hydrolases"/>
    <property type="match status" value="1"/>
</dbReference>
<dbReference type="PROSITE" id="PS00211">
    <property type="entry name" value="ABC_TRANSPORTER_1"/>
    <property type="match status" value="1"/>
</dbReference>
<dbReference type="PROSITE" id="PS50893">
    <property type="entry name" value="ABC_TRANSPORTER_2"/>
    <property type="match status" value="1"/>
</dbReference>
<reference key="1">
    <citation type="journal article" date="2010" name="Plant Cell">
        <title>Two Medicago truncatula half-ABC transporters are essential for arbuscule development in arbuscular mycorrhizal symbiosis.</title>
        <authorList>
            <person name="Zhang Q."/>
            <person name="Blaylock L.A."/>
            <person name="Harrison M.J."/>
        </authorList>
    </citation>
    <scope>NUCLEOTIDE SEQUENCE [GENOMIC DNA / MRNA]</scope>
    <scope>FUNCTION</scope>
    <scope>DISRUPTION PHENOTYPE</scope>
    <scope>TISSUE SPECIFICITY</scope>
    <scope>INDUCTION BY GLOMUS VERSIFORME</scope>
    <scope>INTERACTION WITH STR2</scope>
    <scope>SUBCELLULAR LOCATION</scope>
</reference>
<reference key="2">
    <citation type="journal article" date="2011" name="Nature">
        <title>The Medicago genome provides insight into the evolution of rhizobial symbioses.</title>
        <authorList>
            <person name="Young N.D."/>
            <person name="Debelle F."/>
            <person name="Oldroyd G.E.D."/>
            <person name="Geurts R."/>
            <person name="Cannon S.B."/>
            <person name="Udvardi M.K."/>
            <person name="Benedito V.A."/>
            <person name="Mayer K.F.X."/>
            <person name="Gouzy J."/>
            <person name="Schoof H."/>
            <person name="Van de Peer Y."/>
            <person name="Proost S."/>
            <person name="Cook D.R."/>
            <person name="Meyers B.C."/>
            <person name="Spannagl M."/>
            <person name="Cheung F."/>
            <person name="De Mita S."/>
            <person name="Krishnakumar V."/>
            <person name="Gundlach H."/>
            <person name="Zhou S."/>
            <person name="Mudge J."/>
            <person name="Bharti A.K."/>
            <person name="Murray J.D."/>
            <person name="Naoumkina M.A."/>
            <person name="Rosen B."/>
            <person name="Silverstein K.A.T."/>
            <person name="Tang H."/>
            <person name="Rombauts S."/>
            <person name="Zhao P.X."/>
            <person name="Zhou P."/>
            <person name="Barbe V."/>
            <person name="Bardou P."/>
            <person name="Bechner M."/>
            <person name="Bellec A."/>
            <person name="Berger A."/>
            <person name="Berges H."/>
            <person name="Bidwell S."/>
            <person name="Bisseling T."/>
            <person name="Choisne N."/>
            <person name="Couloux A."/>
            <person name="Denny R."/>
            <person name="Deshpande S."/>
            <person name="Dai X."/>
            <person name="Doyle J.J."/>
            <person name="Dudez A.-M."/>
            <person name="Farmer A.D."/>
            <person name="Fouteau S."/>
            <person name="Franken C."/>
            <person name="Gibelin C."/>
            <person name="Gish J."/>
            <person name="Goldstein S."/>
            <person name="Gonzalez A.J."/>
            <person name="Green P.J."/>
            <person name="Hallab A."/>
            <person name="Hartog M."/>
            <person name="Hua A."/>
            <person name="Humphray S.J."/>
            <person name="Jeong D.-H."/>
            <person name="Jing Y."/>
            <person name="Jocker A."/>
            <person name="Kenton S.M."/>
            <person name="Kim D.-J."/>
            <person name="Klee K."/>
            <person name="Lai H."/>
            <person name="Lang C."/>
            <person name="Lin S."/>
            <person name="Macmil S.L."/>
            <person name="Magdelenat G."/>
            <person name="Matthews L."/>
            <person name="McCorrison J."/>
            <person name="Monaghan E.L."/>
            <person name="Mun J.-H."/>
            <person name="Najar F.Z."/>
            <person name="Nicholson C."/>
            <person name="Noirot C."/>
            <person name="O'Bleness M."/>
            <person name="Paule C.R."/>
            <person name="Poulain J."/>
            <person name="Prion F."/>
            <person name="Qin B."/>
            <person name="Qu C."/>
            <person name="Retzel E.F."/>
            <person name="Riddle C."/>
            <person name="Sallet E."/>
            <person name="Samain S."/>
            <person name="Samson N."/>
            <person name="Sanders I."/>
            <person name="Saurat O."/>
            <person name="Scarpelli C."/>
            <person name="Schiex T."/>
            <person name="Segurens B."/>
            <person name="Severin A.J."/>
            <person name="Sherrier D.J."/>
            <person name="Shi R."/>
            <person name="Sims S."/>
            <person name="Singer S.R."/>
            <person name="Sinharoy S."/>
            <person name="Sterck L."/>
            <person name="Viollet A."/>
            <person name="Wang B.-B."/>
            <person name="Wang K."/>
            <person name="Wang M."/>
            <person name="Wang X."/>
            <person name="Warfsmann J."/>
            <person name="Weissenbach J."/>
            <person name="White D.D."/>
            <person name="White J.D."/>
            <person name="Wiley G.B."/>
            <person name="Wincker P."/>
            <person name="Xing Y."/>
            <person name="Yang L."/>
            <person name="Yao Z."/>
            <person name="Ying F."/>
            <person name="Zhai J."/>
            <person name="Zhou L."/>
            <person name="Zuber A."/>
            <person name="Denarie J."/>
            <person name="Dixon R.A."/>
            <person name="May G.D."/>
            <person name="Schwartz D.C."/>
            <person name="Rogers J."/>
            <person name="Quetier F."/>
            <person name="Town C.D."/>
            <person name="Roe B.A."/>
        </authorList>
    </citation>
    <scope>NUCLEOTIDE SEQUENCE [LARGE SCALE GENOMIC DNA]</scope>
    <source>
        <strain>cv. Jemalong A17</strain>
    </source>
</reference>
<reference key="3">
    <citation type="journal article" date="2014" name="BMC Genomics">
        <title>An improved genome release (version Mt4.0) for the model legume Medicago truncatula.</title>
        <authorList>
            <person name="Tang H."/>
            <person name="Krishnakumar V."/>
            <person name="Bidwell S."/>
            <person name="Rosen B."/>
            <person name="Chan A."/>
            <person name="Zhou S."/>
            <person name="Gentzbittel L."/>
            <person name="Childs K.L."/>
            <person name="Yandell M."/>
            <person name="Gundlach H."/>
            <person name="Mayer K.F."/>
            <person name="Schwartz D.C."/>
            <person name="Town C.D."/>
        </authorList>
    </citation>
    <scope>GENOME REANNOTATION</scope>
    <source>
        <strain>cv. Jemalong A17</strain>
    </source>
</reference>
<reference key="4">
    <citation type="journal article" date="2018" name="Nat. Plants">
        <title>Whole-genome landscape of Medicago truncatula symbiotic genes.</title>
        <authorList>
            <person name="Pecrix Y."/>
            <person name="Staton S.E."/>
            <person name="Sallet E."/>
            <person name="Lelandais-Briere C."/>
            <person name="Moreau S."/>
            <person name="Carrere S."/>
            <person name="Blein T."/>
            <person name="Jardinaud M.F."/>
            <person name="Latrasse D."/>
            <person name="Zouine M."/>
            <person name="Zahm M."/>
            <person name="Kreplak J."/>
            <person name="Mayjonade B."/>
            <person name="Satge C."/>
            <person name="Perez M."/>
            <person name="Cauet S."/>
            <person name="Marande W."/>
            <person name="Chantry-Darmon C."/>
            <person name="Lopez-Roques C."/>
            <person name="Bouchez O."/>
            <person name="Berard A."/>
            <person name="Debelle F."/>
            <person name="Munos S."/>
            <person name="Bendahmane A."/>
            <person name="Berges H."/>
            <person name="Niebel A."/>
            <person name="Buitink J."/>
            <person name="Frugier F."/>
            <person name="Benhamed M."/>
            <person name="Crespi M."/>
            <person name="Gouzy J."/>
            <person name="Gamas P."/>
        </authorList>
    </citation>
    <scope>NUCLEOTIDE SEQUENCE [LARGE SCALE GENOMIC DNA]</scope>
    <source>
        <strain>cv. Jemalong A17</strain>
    </source>
</reference>
<reference key="5">
    <citation type="journal article" date="2015" name="Plant Physiol.">
        <title>Hyphal branching during arbuscule development requires reduced arbuscular mycorrhiza1.</title>
        <authorList>
            <person name="Park H.-J."/>
            <person name="Floss D.S."/>
            <person name="Levesque-Tremblay V."/>
            <person name="Bravo A."/>
            <person name="Harrison M.J."/>
        </authorList>
    </citation>
    <scope>INDUCTION BY RAM1 AND GLOMUS VERSIFORME</scope>
</reference>
<proteinExistence type="evidence at protein level"/>
<evidence type="ECO:0000255" key="1"/>
<evidence type="ECO:0000255" key="2">
    <source>
        <dbReference type="PROSITE-ProRule" id="PRU00434"/>
    </source>
</evidence>
<evidence type="ECO:0000255" key="3">
    <source>
        <dbReference type="PROSITE-ProRule" id="PRU00498"/>
    </source>
</evidence>
<evidence type="ECO:0000256" key="4">
    <source>
        <dbReference type="SAM" id="MobiDB-lite"/>
    </source>
</evidence>
<evidence type="ECO:0000269" key="5">
    <source>
    </source>
</evidence>
<evidence type="ECO:0000269" key="6">
    <source>
    </source>
</evidence>
<evidence type="ECO:0000303" key="7">
    <source>
    </source>
</evidence>
<evidence type="ECO:0000305" key="8"/>
<evidence type="ECO:0000312" key="9">
    <source>
        <dbReference type="EMBL" id="AET05608.1"/>
    </source>
</evidence>
<evidence type="ECO:0000312" key="10">
    <source>
        <dbReference type="EMBL" id="RHN43934.1"/>
    </source>
</evidence>
<accession>D3GE74</accession>
<name>STR1_MEDTR</name>
<feature type="chain" id="PRO_0000450018" description="ABC transporter G family member STR">
    <location>
        <begin position="1"/>
        <end position="817"/>
    </location>
</feature>
<feature type="topological domain" description="Cytoplasmic" evidence="8">
    <location>
        <begin position="1"/>
        <end position="542"/>
    </location>
</feature>
<feature type="transmembrane region" description="Helical; Name=1" evidence="1">
    <location>
        <begin position="543"/>
        <end position="563"/>
    </location>
</feature>
<feature type="topological domain" description="Extracellular" evidence="8">
    <location>
        <begin position="564"/>
        <end position="579"/>
    </location>
</feature>
<feature type="transmembrane region" description="Helical; Name=2" evidence="1">
    <location>
        <begin position="580"/>
        <end position="600"/>
    </location>
</feature>
<feature type="topological domain" description="Cytoplasmic" evidence="8">
    <location>
        <begin position="601"/>
        <end position="621"/>
    </location>
</feature>
<feature type="transmembrane region" description="Helical; Name=3" evidence="1">
    <location>
        <begin position="622"/>
        <end position="642"/>
    </location>
</feature>
<feature type="topological domain" description="Extracellular" evidence="8">
    <location>
        <begin position="643"/>
        <end position="657"/>
    </location>
</feature>
<feature type="transmembrane region" description="Helical; Name=4" evidence="1">
    <location>
        <begin position="658"/>
        <end position="678"/>
    </location>
</feature>
<feature type="topological domain" description="Cytoplasmic" evidence="8">
    <location>
        <begin position="679"/>
        <end position="681"/>
    </location>
</feature>
<feature type="transmembrane region" description="Helical; Name=5" evidence="1">
    <location>
        <begin position="682"/>
        <end position="702"/>
    </location>
</feature>
<feature type="topological domain" description="Extracellular" evidence="8">
    <location>
        <begin position="703"/>
        <end position="787"/>
    </location>
</feature>
<feature type="transmembrane region" description="Helical; Name=6" evidence="1">
    <location>
        <begin position="788"/>
        <end position="808"/>
    </location>
</feature>
<feature type="topological domain" description="Cytoplasmic" evidence="8">
    <location>
        <begin position="809"/>
        <end position="817"/>
    </location>
</feature>
<feature type="domain" description="ABC transporter" evidence="2">
    <location>
        <begin position="43"/>
        <end position="294"/>
    </location>
</feature>
<feature type="region of interest" description="Disordered" evidence="4">
    <location>
        <begin position="1"/>
        <end position="30"/>
    </location>
</feature>
<feature type="region of interest" description="Disordered" evidence="4">
    <location>
        <begin position="321"/>
        <end position="349"/>
    </location>
</feature>
<feature type="region of interest" description="Disordered" evidence="4">
    <location>
        <begin position="362"/>
        <end position="395"/>
    </location>
</feature>
<feature type="region of interest" description="Disordered" evidence="4">
    <location>
        <begin position="439"/>
        <end position="463"/>
    </location>
</feature>
<feature type="compositionally biased region" description="Polar residues" evidence="4">
    <location>
        <begin position="362"/>
        <end position="375"/>
    </location>
</feature>
<feature type="compositionally biased region" description="Acidic residues" evidence="4">
    <location>
        <begin position="377"/>
        <end position="388"/>
    </location>
</feature>
<feature type="binding site" evidence="2">
    <location>
        <begin position="87"/>
        <end position="94"/>
    </location>
    <ligand>
        <name>ATP</name>
        <dbReference type="ChEBI" id="CHEBI:30616"/>
    </ligand>
</feature>
<feature type="glycosylation site" description="N-linked (GlcNAc...) asparagine" evidence="3">
    <location>
        <position position="762"/>
    </location>
</feature>
<organism>
    <name type="scientific">Medicago truncatula</name>
    <name type="common">Barrel medic</name>
    <name type="synonym">Medicago tribuloides</name>
    <dbReference type="NCBI Taxonomy" id="3880"/>
    <lineage>
        <taxon>Eukaryota</taxon>
        <taxon>Viridiplantae</taxon>
        <taxon>Streptophyta</taxon>
        <taxon>Embryophyta</taxon>
        <taxon>Tracheophyta</taxon>
        <taxon>Spermatophyta</taxon>
        <taxon>Magnoliopsida</taxon>
        <taxon>eudicotyledons</taxon>
        <taxon>Gunneridae</taxon>
        <taxon>Pentapetalae</taxon>
        <taxon>rosids</taxon>
        <taxon>fabids</taxon>
        <taxon>Fabales</taxon>
        <taxon>Fabaceae</taxon>
        <taxon>Papilionoideae</taxon>
        <taxon>50 kb inversion clade</taxon>
        <taxon>NPAAA clade</taxon>
        <taxon>Hologalegina</taxon>
        <taxon>IRL clade</taxon>
        <taxon>Trifolieae</taxon>
        <taxon>Medicago</taxon>
    </lineage>
</organism>
<keyword id="KW-0067">ATP-binding</keyword>
<keyword id="KW-1003">Cell membrane</keyword>
<keyword id="KW-0325">Glycoprotein</keyword>
<keyword id="KW-0378">Hydrolase</keyword>
<keyword id="KW-0472">Membrane</keyword>
<keyword id="KW-0547">Nucleotide-binding</keyword>
<keyword id="KW-1185">Reference proteome</keyword>
<keyword id="KW-1278">Translocase</keyword>
<keyword id="KW-0812">Transmembrane</keyword>
<keyword id="KW-1133">Transmembrane helix</keyword>
<keyword id="KW-0813">Transport</keyword>